<proteinExistence type="evidence at protein level"/>
<organism>
    <name type="scientific">Drosophila melanogaster</name>
    <name type="common">Fruit fly</name>
    <dbReference type="NCBI Taxonomy" id="7227"/>
    <lineage>
        <taxon>Eukaryota</taxon>
        <taxon>Metazoa</taxon>
        <taxon>Ecdysozoa</taxon>
        <taxon>Arthropoda</taxon>
        <taxon>Hexapoda</taxon>
        <taxon>Insecta</taxon>
        <taxon>Pterygota</taxon>
        <taxon>Neoptera</taxon>
        <taxon>Endopterygota</taxon>
        <taxon>Diptera</taxon>
        <taxon>Brachycera</taxon>
        <taxon>Muscomorpha</taxon>
        <taxon>Ephydroidea</taxon>
        <taxon>Drosophilidae</taxon>
        <taxon>Drosophila</taxon>
        <taxon>Sophophora</taxon>
    </lineage>
</organism>
<evidence type="ECO:0000250" key="1"/>
<evidence type="ECO:0000256" key="2">
    <source>
        <dbReference type="SAM" id="MobiDB-lite"/>
    </source>
</evidence>
<evidence type="ECO:0000269" key="3">
    <source>
    </source>
</evidence>
<evidence type="ECO:0000269" key="4">
    <source>
    </source>
</evidence>
<evidence type="ECO:0000269" key="5">
    <source>
    </source>
</evidence>
<evidence type="ECO:0000303" key="6">
    <source>
    </source>
</evidence>
<evidence type="ECO:0000303" key="7">
    <source>
    </source>
</evidence>
<evidence type="ECO:0000305" key="8"/>
<accession>P54352</accession>
<accession>C8VV66</accession>
<accession>M9NEJ9</accession>
<accession>M9NGH8</accession>
<accession>Q1RL01</accession>
<accession>Q540Y9</accession>
<accession>Q86B51</accession>
<accession>Q8IR20</accession>
<accession>Q9VXI7</accession>
<dbReference type="EC" id="2.7.1.82" evidence="5"/>
<dbReference type="EMBL" id="L35603">
    <property type="protein sequence ID" value="AAC37209.1"/>
    <property type="molecule type" value="mRNA"/>
</dbReference>
<dbReference type="EMBL" id="L35604">
    <property type="protein sequence ID" value="AAC37210.1"/>
    <property type="molecule type" value="mRNA"/>
</dbReference>
<dbReference type="EMBL" id="AE014298">
    <property type="protein sequence ID" value="AAF48574.1"/>
    <property type="molecule type" value="Genomic_DNA"/>
</dbReference>
<dbReference type="EMBL" id="AE014298">
    <property type="protein sequence ID" value="AAF48575.2"/>
    <property type="molecule type" value="Genomic_DNA"/>
</dbReference>
<dbReference type="EMBL" id="AE014298">
    <property type="protein sequence ID" value="AAN09387.1"/>
    <property type="molecule type" value="Genomic_DNA"/>
</dbReference>
<dbReference type="EMBL" id="AE014298">
    <property type="protein sequence ID" value="AAO41661.2"/>
    <property type="molecule type" value="Genomic_DNA"/>
</dbReference>
<dbReference type="EMBL" id="AE014298">
    <property type="protein sequence ID" value="AFH07419.1"/>
    <property type="molecule type" value="Genomic_DNA"/>
</dbReference>
<dbReference type="EMBL" id="AE014298">
    <property type="protein sequence ID" value="AFH07420.1"/>
    <property type="molecule type" value="Genomic_DNA"/>
</dbReference>
<dbReference type="EMBL" id="AY118437">
    <property type="protein sequence ID" value="AAM48466.1"/>
    <property type="molecule type" value="mRNA"/>
</dbReference>
<dbReference type="EMBL" id="BT025059">
    <property type="protein sequence ID" value="ABE73230.1"/>
    <property type="status" value="ALT_SEQ"/>
    <property type="molecule type" value="mRNA"/>
</dbReference>
<dbReference type="EMBL" id="BT099812">
    <property type="protein sequence ID" value="ACV91649.1"/>
    <property type="status" value="ALT_FRAME"/>
    <property type="molecule type" value="mRNA"/>
</dbReference>
<dbReference type="PIR" id="A54980">
    <property type="entry name" value="A54980"/>
</dbReference>
<dbReference type="RefSeq" id="NP_001245706.1">
    <molecule id="P54352-5"/>
    <property type="nucleotide sequence ID" value="NM_001258777.1"/>
</dbReference>
<dbReference type="RefSeq" id="NP_001245707.1">
    <molecule id="P54352-4"/>
    <property type="nucleotide sequence ID" value="NM_001258778.2"/>
</dbReference>
<dbReference type="RefSeq" id="NP_001285319.1">
    <molecule id="P54352-5"/>
    <property type="nucleotide sequence ID" value="NM_001298390.1"/>
</dbReference>
<dbReference type="RefSeq" id="NP_523364.2">
    <molecule id="P54352-2"/>
    <property type="nucleotide sequence ID" value="NM_078640.4"/>
</dbReference>
<dbReference type="RefSeq" id="NP_727941.2">
    <molecule id="P54352-2"/>
    <property type="nucleotide sequence ID" value="NM_167489.2"/>
</dbReference>
<dbReference type="RefSeq" id="NP_727942.1">
    <molecule id="P54352-2"/>
    <property type="nucleotide sequence ID" value="NM_167490.3"/>
</dbReference>
<dbReference type="RefSeq" id="NP_727943.1">
    <molecule id="P54352-2"/>
    <property type="nucleotide sequence ID" value="NM_167491.2"/>
</dbReference>
<dbReference type="RefSeq" id="NP_788914.2">
    <molecule id="P54352-2"/>
    <property type="nucleotide sequence ID" value="NM_176741.3"/>
</dbReference>
<dbReference type="SMR" id="P54352"/>
<dbReference type="BioGRID" id="58926">
    <property type="interactions" value="24"/>
</dbReference>
<dbReference type="FunCoup" id="P54352">
    <property type="interactions" value="1891"/>
</dbReference>
<dbReference type="IntAct" id="P54352">
    <property type="interactions" value="2"/>
</dbReference>
<dbReference type="STRING" id="7227.FBpp0300843"/>
<dbReference type="iPTMnet" id="P54352"/>
<dbReference type="PaxDb" id="7227-FBpp0073990"/>
<dbReference type="DNASU" id="32585"/>
<dbReference type="EnsemblMetazoa" id="FBtr0074211">
    <molecule id="P54352-2"/>
    <property type="protein sequence ID" value="FBpp0073990"/>
    <property type="gene ID" value="FBgn0000536"/>
</dbReference>
<dbReference type="EnsemblMetazoa" id="FBtr0074212">
    <molecule id="P54352-2"/>
    <property type="protein sequence ID" value="FBpp0073991"/>
    <property type="gene ID" value="FBgn0000536"/>
</dbReference>
<dbReference type="EnsemblMetazoa" id="FBtr0074214">
    <molecule id="P54352-2"/>
    <property type="protein sequence ID" value="FBpp0073993"/>
    <property type="gene ID" value="FBgn0000536"/>
</dbReference>
<dbReference type="EnsemblMetazoa" id="FBtr0308617">
    <molecule id="P54352-5"/>
    <property type="protein sequence ID" value="FBpp0300841"/>
    <property type="gene ID" value="FBgn0000536"/>
</dbReference>
<dbReference type="EnsemblMetazoa" id="FBtr0308618">
    <molecule id="P54352-4"/>
    <property type="protein sequence ID" value="FBpp0300842"/>
    <property type="gene ID" value="FBgn0000536"/>
</dbReference>
<dbReference type="EnsemblMetazoa" id="FBtr0308619">
    <molecule id="P54352-2"/>
    <property type="protein sequence ID" value="FBpp0300843"/>
    <property type="gene ID" value="FBgn0000536"/>
</dbReference>
<dbReference type="EnsemblMetazoa" id="FBtr0343519">
    <molecule id="P54352-2"/>
    <property type="protein sequence ID" value="FBpp0310123"/>
    <property type="gene ID" value="FBgn0000536"/>
</dbReference>
<dbReference type="EnsemblMetazoa" id="FBtr0343520">
    <molecule id="P54352-5"/>
    <property type="protein sequence ID" value="FBpp0310124"/>
    <property type="gene ID" value="FBgn0000536"/>
</dbReference>
<dbReference type="GeneID" id="32585"/>
<dbReference type="KEGG" id="dme:Dmel_CG3525"/>
<dbReference type="UCSC" id="CG3525-RB">
    <property type="organism name" value="d. melanogaster"/>
</dbReference>
<dbReference type="UCSC" id="CG3525-RD">
    <property type="organism name" value="d. melanogaster"/>
</dbReference>
<dbReference type="UCSC" id="CG3525-RE">
    <property type="organism name" value="d. melanogaster"/>
</dbReference>
<dbReference type="AGR" id="FB:FBgn0000536"/>
<dbReference type="CTD" id="32585"/>
<dbReference type="FlyBase" id="FBgn0000536">
    <property type="gene designation" value="eas"/>
</dbReference>
<dbReference type="VEuPathDB" id="VectorBase:FBgn0000536"/>
<dbReference type="eggNOG" id="KOG4720">
    <property type="taxonomic scope" value="Eukaryota"/>
</dbReference>
<dbReference type="GeneTree" id="ENSGT00950000182939"/>
<dbReference type="InParanoid" id="P54352"/>
<dbReference type="OMA" id="FALIPKY"/>
<dbReference type="OrthoDB" id="10267235at2759"/>
<dbReference type="PhylomeDB" id="P54352"/>
<dbReference type="Reactome" id="R-DME-1483213">
    <property type="pathway name" value="Synthesis of PE"/>
</dbReference>
<dbReference type="UniPathway" id="UPA00558">
    <property type="reaction ID" value="UER00741"/>
</dbReference>
<dbReference type="BioGRID-ORCS" id="32585">
    <property type="hits" value="0 hits in 3 CRISPR screens"/>
</dbReference>
<dbReference type="GenomeRNAi" id="32585"/>
<dbReference type="PRO" id="PR:P54352"/>
<dbReference type="Proteomes" id="UP000000803">
    <property type="component" value="Chromosome X"/>
</dbReference>
<dbReference type="Bgee" id="FBgn0000536">
    <property type="expression patterns" value="Expressed in fat body cell in open tracheal system trachea and 261 other cell types or tissues"/>
</dbReference>
<dbReference type="ExpressionAtlas" id="P54352">
    <property type="expression patterns" value="baseline and differential"/>
</dbReference>
<dbReference type="GO" id="GO:0005737">
    <property type="term" value="C:cytoplasm"/>
    <property type="evidence" value="ECO:0000250"/>
    <property type="project" value="FlyBase"/>
</dbReference>
<dbReference type="GO" id="GO:0005524">
    <property type="term" value="F:ATP binding"/>
    <property type="evidence" value="ECO:0007669"/>
    <property type="project" value="UniProtKB-KW"/>
</dbReference>
<dbReference type="GO" id="GO:0004103">
    <property type="term" value="F:choline kinase activity"/>
    <property type="evidence" value="ECO:0000304"/>
    <property type="project" value="FlyBase"/>
</dbReference>
<dbReference type="GO" id="GO:0004305">
    <property type="term" value="F:ethanolamine kinase activity"/>
    <property type="evidence" value="ECO:0000314"/>
    <property type="project" value="FlyBase"/>
</dbReference>
<dbReference type="GO" id="GO:0008306">
    <property type="term" value="P:associative learning"/>
    <property type="evidence" value="ECO:0000304"/>
    <property type="project" value="FlyBase"/>
</dbReference>
<dbReference type="GO" id="GO:0055059">
    <property type="term" value="P:asymmetric neuroblast division"/>
    <property type="evidence" value="ECO:0000315"/>
    <property type="project" value="FlyBase"/>
</dbReference>
<dbReference type="GO" id="GO:0007420">
    <property type="term" value="P:brain development"/>
    <property type="evidence" value="ECO:0000315"/>
    <property type="project" value="FlyBase"/>
</dbReference>
<dbReference type="GO" id="GO:0046959">
    <property type="term" value="P:habituation"/>
    <property type="evidence" value="ECO:0000304"/>
    <property type="project" value="FlyBase"/>
</dbReference>
<dbReference type="GO" id="GO:0007616">
    <property type="term" value="P:long-term memory"/>
    <property type="evidence" value="ECO:0000304"/>
    <property type="project" value="FlyBase"/>
</dbReference>
<dbReference type="GO" id="GO:0007638">
    <property type="term" value="P:mechanosensory behavior"/>
    <property type="evidence" value="ECO:0000315"/>
    <property type="project" value="FlyBase"/>
</dbReference>
<dbReference type="GO" id="GO:0016319">
    <property type="term" value="P:mushroom body development"/>
    <property type="evidence" value="ECO:0000315"/>
    <property type="project" value="FlyBase"/>
</dbReference>
<dbReference type="GO" id="GO:0006646">
    <property type="term" value="P:phosphatidylethanolamine biosynthetic process"/>
    <property type="evidence" value="ECO:0000318"/>
    <property type="project" value="GO_Central"/>
</dbReference>
<dbReference type="GO" id="GO:0046337">
    <property type="term" value="P:phosphatidylethanolamine metabolic process"/>
    <property type="evidence" value="ECO:0000314"/>
    <property type="project" value="FlyBase"/>
</dbReference>
<dbReference type="GO" id="GO:0001666">
    <property type="term" value="P:response to hypoxia"/>
    <property type="evidence" value="ECO:0000314"/>
    <property type="project" value="FlyBase"/>
</dbReference>
<dbReference type="GO" id="GO:0009612">
    <property type="term" value="P:response to mechanical stimulus"/>
    <property type="evidence" value="ECO:0000315"/>
    <property type="project" value="FlyBase"/>
</dbReference>
<dbReference type="CDD" id="cd05157">
    <property type="entry name" value="ETNK_euk"/>
    <property type="match status" value="1"/>
</dbReference>
<dbReference type="Gene3D" id="3.90.1200.10">
    <property type="match status" value="1"/>
</dbReference>
<dbReference type="Gene3D" id="3.30.200.20">
    <property type="entry name" value="Phosphorylase Kinase, domain 1"/>
    <property type="match status" value="1"/>
</dbReference>
<dbReference type="InterPro" id="IPR011009">
    <property type="entry name" value="Kinase-like_dom_sf"/>
</dbReference>
<dbReference type="PANTHER" id="PTHR22603">
    <property type="entry name" value="CHOLINE/ETHANOALAMINE KINASE"/>
    <property type="match status" value="1"/>
</dbReference>
<dbReference type="PANTHER" id="PTHR22603:SF66">
    <property type="entry name" value="ETHANOLAMINE KINASE"/>
    <property type="match status" value="1"/>
</dbReference>
<dbReference type="Pfam" id="PF01633">
    <property type="entry name" value="Choline_kinase"/>
    <property type="match status" value="1"/>
</dbReference>
<dbReference type="SUPFAM" id="SSF56112">
    <property type="entry name" value="Protein kinase-like (PK-like)"/>
    <property type="match status" value="1"/>
</dbReference>
<comment type="function">
    <text evidence="5">Highly specific for ethanolamine phosphorylation. May be a rate-controlling step in phosphatidylethanolamine biosynthesis.</text>
</comment>
<comment type="catalytic activity">
    <reaction evidence="5">
        <text>ethanolamine + ATP = phosphoethanolamine + ADP + H(+)</text>
        <dbReference type="Rhea" id="RHEA:13069"/>
        <dbReference type="ChEBI" id="CHEBI:15378"/>
        <dbReference type="ChEBI" id="CHEBI:30616"/>
        <dbReference type="ChEBI" id="CHEBI:57603"/>
        <dbReference type="ChEBI" id="CHEBI:58190"/>
        <dbReference type="ChEBI" id="CHEBI:456216"/>
        <dbReference type="EC" id="2.7.1.82"/>
    </reaction>
    <physiologicalReaction direction="left-to-right" evidence="5">
        <dbReference type="Rhea" id="RHEA:13070"/>
    </physiologicalReaction>
</comment>
<comment type="pathway">
    <text evidence="5">Phospholipid metabolism; phosphatidylethanolamine biosynthesis; phosphatidylethanolamine from ethanolamine: step 1/3.</text>
</comment>
<comment type="subcellular location">
    <subcellularLocation>
        <location evidence="1">Cytoplasm</location>
    </subcellularLocation>
</comment>
<comment type="alternative products">
    <event type="alternative splicing"/>
    <isoform>
        <id>P54352-1</id>
        <name>E</name>
        <sequence type="displayed"/>
    </isoform>
    <isoform>
        <id>P54352-2</id>
        <name>A</name>
        <name>B</name>
        <name>C</name>
        <name>H</name>
        <name>I</name>
        <sequence type="described" ref="VSP_001068"/>
    </isoform>
    <isoform>
        <id>P54352-4</id>
        <name>G</name>
        <sequence type="described" ref="VSP_053946 VSP_053947 VSP_053948"/>
    </isoform>
    <isoform>
        <id>P54352-5</id>
        <name>F</name>
        <sequence type="described" ref="VSP_053947 VSP_053948"/>
    </isoform>
</comment>
<comment type="disruption phenotype">
    <text evidence="5">'Bang sensitive' phenotype; induction of paralysis with electrical stimulation results in a brief seizure, followed by a failure of the muscles to respond to giant fiber stimulation. This is due to an excitability defect caused by altered membrane phospholipid composition.</text>
</comment>
<comment type="similarity">
    <text evidence="8">Belongs to the choline/ethanolamine kinase family.</text>
</comment>
<comment type="sequence caution" evidence="8">
    <conflict type="frameshift">
        <sequence resource="EMBL-CDS" id="ABE73230"/>
    </conflict>
</comment>
<comment type="sequence caution" evidence="8">
    <conflict type="miscellaneous discrepancy">
        <sequence resource="EMBL-CDS" id="ABE73230"/>
    </conflict>
    <text>Intron retention.</text>
</comment>
<comment type="sequence caution" evidence="8">
    <conflict type="frameshift">
        <sequence resource="EMBL-CDS" id="ACV91649"/>
    </conflict>
</comment>
<feature type="chain" id="PRO_0000206231" description="Ethanolamine kinase">
    <location>
        <begin position="1"/>
        <end position="518"/>
    </location>
</feature>
<feature type="region of interest" description="Disordered" evidence="2">
    <location>
        <begin position="1"/>
        <end position="88"/>
    </location>
</feature>
<feature type="compositionally biased region" description="Polar residues" evidence="2">
    <location>
        <begin position="1"/>
        <end position="19"/>
    </location>
</feature>
<feature type="compositionally biased region" description="Low complexity" evidence="2">
    <location>
        <begin position="33"/>
        <end position="68"/>
    </location>
</feature>
<feature type="compositionally biased region" description="Basic and acidic residues" evidence="2">
    <location>
        <begin position="69"/>
        <end position="88"/>
    </location>
</feature>
<feature type="modified residue" description="Phosphoserine" evidence="3 4">
    <location>
        <position position="190"/>
    </location>
</feature>
<feature type="modified residue" description="Phosphoserine" evidence="4">
    <location>
        <position position="194"/>
    </location>
</feature>
<feature type="splice variant" id="VSP_053946" description="In isoform G." evidence="8">
    <original>GTETKSNSYTGQISTSGGNPKVMKDSLSL</original>
    <variation>STIRSKKN</variation>
    <location>
        <begin position="2"/>
        <end position="30"/>
    </location>
</feature>
<feature type="splice variant" id="VSP_001068" description="In isoform A." evidence="6 7">
    <location>
        <begin position="130"/>
        <end position="152"/>
    </location>
</feature>
<feature type="splice variant" id="VSP_053947" description="In isoform F and isoform G." evidence="8">
    <original>YSFTDGITNKLVGCFHKEIS</original>
    <variation>VLPMASQTNWSDVFIRRSPN</variation>
    <location>
        <begin position="152"/>
        <end position="171"/>
    </location>
</feature>
<feature type="splice variant" id="VSP_053948" description="In isoform F and isoform G." evidence="8">
    <location>
        <begin position="172"/>
        <end position="518"/>
    </location>
</feature>
<feature type="sequence conflict" description="In Ref. 1; AAC37209." evidence="8" ref="1">
    <original>YPAQNAMVMMTLY</original>
    <variation>VSGPKCDGDDDA</variation>
    <location>
        <begin position="140"/>
        <end position="152"/>
    </location>
</feature>
<name>EAS_DROME</name>
<sequence length="518" mass="59563">MGTETKSNSYTGQISTSGGNPKVMKDSLSLVRQTVNQQTLSLSQSNQVQNQLNSHSNSNSYPNPSGSENKNENEQNSRDIRAKPEDKSRKEAIVPFVPIFVEEADVIQGAKELLKVIRPTWDLSHVEFKIRVVPQIEDRYPAQNAMVMMTLYSFTDGITNKLVGCFHKEISKLNDENGGSYLPIKTQGLSPVQSEDPVIIEKEDDDEFTDDRAADDGSPVQYSDNVVLVRIYGNKTDLLIDRKAETQNFLLLHTYGLAPSLYATFKNGLVYEYVPGTTLNTDSVLCPEIWPLVARRMAEMHRKVRKHGDSSATKPMPMIWKKTQSFLDLVPERFSDAEKHKRVKETFLPIGRLREEFNKLYEYLEALDSPIVFSHNDLLLGNVIYTQSLNTVNFIDYEYADYNFQAFDIGNHFAEMCGVDEVDYSRYPKREFQLQWLRVYLEEYLQRSNIQNDEVELLYVQVNQFALASHIFWTVWSLLQAEHSTIDFDYVGYAFLRYNEYLARKVEFLSLTAAKNNK</sequence>
<gene>
    <name type="primary">eas</name>
    <name type="ORF">CG3525</name>
</gene>
<keyword id="KW-0025">Alternative splicing</keyword>
<keyword id="KW-0067">ATP-binding</keyword>
<keyword id="KW-0963">Cytoplasm</keyword>
<keyword id="KW-0418">Kinase</keyword>
<keyword id="KW-0444">Lipid biosynthesis</keyword>
<keyword id="KW-0443">Lipid metabolism</keyword>
<keyword id="KW-0547">Nucleotide-binding</keyword>
<keyword id="KW-0594">Phospholipid biosynthesis</keyword>
<keyword id="KW-1208">Phospholipid metabolism</keyword>
<keyword id="KW-0597">Phosphoprotein</keyword>
<keyword id="KW-1185">Reference proteome</keyword>
<keyword id="KW-0808">Transferase</keyword>
<protein>
    <recommendedName>
        <fullName>Ethanolamine kinase</fullName>
        <shortName>EK</shortName>
        <ecNumber evidence="5">2.7.1.82</ecNumber>
    </recommendedName>
    <alternativeName>
        <fullName>Protein easily shocked</fullName>
    </alternativeName>
</protein>
<reference key="1">
    <citation type="journal article" date="1994" name="Cell">
        <title>The Drosophila easily shocked gene: a mutation in a phospholipid synthetic pathway causes seizure, neuronal failure, and paralysis.</title>
        <authorList>
            <person name="Pavlidis P."/>
            <person name="Ramaswami M."/>
            <person name="Tanouye M.A."/>
        </authorList>
    </citation>
    <scope>NUCLEOTIDE SEQUENCE [MRNA] (ISOFORMS A AND E)</scope>
    <scope>FUNCTION</scope>
    <scope>CATALYTIC ACTIVITY</scope>
    <scope>PATHWAY</scope>
    <scope>DISRUPTION PHENOTYPE</scope>
    <source>
        <tissue>Embryo</tissue>
    </source>
</reference>
<reference key="2">
    <citation type="journal article" date="2000" name="Science">
        <title>The genome sequence of Drosophila melanogaster.</title>
        <authorList>
            <person name="Adams M.D."/>
            <person name="Celniker S.E."/>
            <person name="Holt R.A."/>
            <person name="Evans C.A."/>
            <person name="Gocayne J.D."/>
            <person name="Amanatides P.G."/>
            <person name="Scherer S.E."/>
            <person name="Li P.W."/>
            <person name="Hoskins R.A."/>
            <person name="Galle R.F."/>
            <person name="George R.A."/>
            <person name="Lewis S.E."/>
            <person name="Richards S."/>
            <person name="Ashburner M."/>
            <person name="Henderson S.N."/>
            <person name="Sutton G.G."/>
            <person name="Wortman J.R."/>
            <person name="Yandell M.D."/>
            <person name="Zhang Q."/>
            <person name="Chen L.X."/>
            <person name="Brandon R.C."/>
            <person name="Rogers Y.-H.C."/>
            <person name="Blazej R.G."/>
            <person name="Champe M."/>
            <person name="Pfeiffer B.D."/>
            <person name="Wan K.H."/>
            <person name="Doyle C."/>
            <person name="Baxter E.G."/>
            <person name="Helt G."/>
            <person name="Nelson C.R."/>
            <person name="Miklos G.L.G."/>
            <person name="Abril J.F."/>
            <person name="Agbayani A."/>
            <person name="An H.-J."/>
            <person name="Andrews-Pfannkoch C."/>
            <person name="Baldwin D."/>
            <person name="Ballew R.M."/>
            <person name="Basu A."/>
            <person name="Baxendale J."/>
            <person name="Bayraktaroglu L."/>
            <person name="Beasley E.M."/>
            <person name="Beeson K.Y."/>
            <person name="Benos P.V."/>
            <person name="Berman B.P."/>
            <person name="Bhandari D."/>
            <person name="Bolshakov S."/>
            <person name="Borkova D."/>
            <person name="Botchan M.R."/>
            <person name="Bouck J."/>
            <person name="Brokstein P."/>
            <person name="Brottier P."/>
            <person name="Burtis K.C."/>
            <person name="Busam D.A."/>
            <person name="Butler H."/>
            <person name="Cadieu E."/>
            <person name="Center A."/>
            <person name="Chandra I."/>
            <person name="Cherry J.M."/>
            <person name="Cawley S."/>
            <person name="Dahlke C."/>
            <person name="Davenport L.B."/>
            <person name="Davies P."/>
            <person name="de Pablos B."/>
            <person name="Delcher A."/>
            <person name="Deng Z."/>
            <person name="Mays A.D."/>
            <person name="Dew I."/>
            <person name="Dietz S.M."/>
            <person name="Dodson K."/>
            <person name="Doup L.E."/>
            <person name="Downes M."/>
            <person name="Dugan-Rocha S."/>
            <person name="Dunkov B.C."/>
            <person name="Dunn P."/>
            <person name="Durbin K.J."/>
            <person name="Evangelista C.C."/>
            <person name="Ferraz C."/>
            <person name="Ferriera S."/>
            <person name="Fleischmann W."/>
            <person name="Fosler C."/>
            <person name="Gabrielian A.E."/>
            <person name="Garg N.S."/>
            <person name="Gelbart W.M."/>
            <person name="Glasser K."/>
            <person name="Glodek A."/>
            <person name="Gong F."/>
            <person name="Gorrell J.H."/>
            <person name="Gu Z."/>
            <person name="Guan P."/>
            <person name="Harris M."/>
            <person name="Harris N.L."/>
            <person name="Harvey D.A."/>
            <person name="Heiman T.J."/>
            <person name="Hernandez J.R."/>
            <person name="Houck J."/>
            <person name="Hostin D."/>
            <person name="Houston K.A."/>
            <person name="Howland T.J."/>
            <person name="Wei M.-H."/>
            <person name="Ibegwam C."/>
            <person name="Jalali M."/>
            <person name="Kalush F."/>
            <person name="Karpen G.H."/>
            <person name="Ke Z."/>
            <person name="Kennison J.A."/>
            <person name="Ketchum K.A."/>
            <person name="Kimmel B.E."/>
            <person name="Kodira C.D."/>
            <person name="Kraft C.L."/>
            <person name="Kravitz S."/>
            <person name="Kulp D."/>
            <person name="Lai Z."/>
            <person name="Lasko P."/>
            <person name="Lei Y."/>
            <person name="Levitsky A.A."/>
            <person name="Li J.H."/>
            <person name="Li Z."/>
            <person name="Liang Y."/>
            <person name="Lin X."/>
            <person name="Liu X."/>
            <person name="Mattei B."/>
            <person name="McIntosh T.C."/>
            <person name="McLeod M.P."/>
            <person name="McPherson D."/>
            <person name="Merkulov G."/>
            <person name="Milshina N.V."/>
            <person name="Mobarry C."/>
            <person name="Morris J."/>
            <person name="Moshrefi A."/>
            <person name="Mount S.M."/>
            <person name="Moy M."/>
            <person name="Murphy B."/>
            <person name="Murphy L."/>
            <person name="Muzny D.M."/>
            <person name="Nelson D.L."/>
            <person name="Nelson D.R."/>
            <person name="Nelson K.A."/>
            <person name="Nixon K."/>
            <person name="Nusskern D.R."/>
            <person name="Pacleb J.M."/>
            <person name="Palazzolo M."/>
            <person name="Pittman G.S."/>
            <person name="Pan S."/>
            <person name="Pollard J."/>
            <person name="Puri V."/>
            <person name="Reese M.G."/>
            <person name="Reinert K."/>
            <person name="Remington K."/>
            <person name="Saunders R.D.C."/>
            <person name="Scheeler F."/>
            <person name="Shen H."/>
            <person name="Shue B.C."/>
            <person name="Siden-Kiamos I."/>
            <person name="Simpson M."/>
            <person name="Skupski M.P."/>
            <person name="Smith T.J."/>
            <person name="Spier E."/>
            <person name="Spradling A.C."/>
            <person name="Stapleton M."/>
            <person name="Strong R."/>
            <person name="Sun E."/>
            <person name="Svirskas R."/>
            <person name="Tector C."/>
            <person name="Turner R."/>
            <person name="Venter E."/>
            <person name="Wang A.H."/>
            <person name="Wang X."/>
            <person name="Wang Z.-Y."/>
            <person name="Wassarman D.A."/>
            <person name="Weinstock G.M."/>
            <person name="Weissenbach J."/>
            <person name="Williams S.M."/>
            <person name="Woodage T."/>
            <person name="Worley K.C."/>
            <person name="Wu D."/>
            <person name="Yang S."/>
            <person name="Yao Q.A."/>
            <person name="Ye J."/>
            <person name="Yeh R.-F."/>
            <person name="Zaveri J.S."/>
            <person name="Zhan M."/>
            <person name="Zhang G."/>
            <person name="Zhao Q."/>
            <person name="Zheng L."/>
            <person name="Zheng X.H."/>
            <person name="Zhong F.N."/>
            <person name="Zhong W."/>
            <person name="Zhou X."/>
            <person name="Zhu S.C."/>
            <person name="Zhu X."/>
            <person name="Smith H.O."/>
            <person name="Gibbs R.A."/>
            <person name="Myers E.W."/>
            <person name="Rubin G.M."/>
            <person name="Venter J.C."/>
        </authorList>
    </citation>
    <scope>NUCLEOTIDE SEQUENCE [LARGE SCALE GENOMIC DNA]</scope>
    <source>
        <strain>Berkeley</strain>
    </source>
</reference>
<reference key="3">
    <citation type="journal article" date="2002" name="Genome Biol.">
        <title>Annotation of the Drosophila melanogaster euchromatic genome: a systematic review.</title>
        <authorList>
            <person name="Misra S."/>
            <person name="Crosby M.A."/>
            <person name="Mungall C.J."/>
            <person name="Matthews B.B."/>
            <person name="Campbell K.S."/>
            <person name="Hradecky P."/>
            <person name="Huang Y."/>
            <person name="Kaminker J.S."/>
            <person name="Millburn G.H."/>
            <person name="Prochnik S.E."/>
            <person name="Smith C.D."/>
            <person name="Tupy J.L."/>
            <person name="Whitfield E.J."/>
            <person name="Bayraktaroglu L."/>
            <person name="Berman B.P."/>
            <person name="Bettencourt B.R."/>
            <person name="Celniker S.E."/>
            <person name="de Grey A.D.N.J."/>
            <person name="Drysdale R.A."/>
            <person name="Harris N.L."/>
            <person name="Richter J."/>
            <person name="Russo S."/>
            <person name="Schroeder A.J."/>
            <person name="Shu S.Q."/>
            <person name="Stapleton M."/>
            <person name="Yamada C."/>
            <person name="Ashburner M."/>
            <person name="Gelbart W.M."/>
            <person name="Rubin G.M."/>
            <person name="Lewis S.E."/>
        </authorList>
    </citation>
    <scope>GENOME REANNOTATION</scope>
    <scope>ALTERNATIVE SPLICING</scope>
    <source>
        <strain>Berkeley</strain>
    </source>
</reference>
<reference key="4">
    <citation type="journal article" date="2002" name="Genome Biol.">
        <title>A Drosophila full-length cDNA resource.</title>
        <authorList>
            <person name="Stapleton M."/>
            <person name="Carlson J.W."/>
            <person name="Brokstein P."/>
            <person name="Yu C."/>
            <person name="Champe M."/>
            <person name="George R.A."/>
            <person name="Guarin H."/>
            <person name="Kronmiller B."/>
            <person name="Pacleb J.M."/>
            <person name="Park S."/>
            <person name="Wan K.H."/>
            <person name="Rubin G.M."/>
            <person name="Celniker S.E."/>
        </authorList>
    </citation>
    <scope>NUCLEOTIDE SEQUENCE [LARGE SCALE MRNA] (ISOFORM A)</scope>
    <source>
        <strain>Berkeley</strain>
        <tissue>Head</tissue>
    </source>
</reference>
<reference key="5">
    <citation type="submission" date="2009-09" db="EMBL/GenBank/DDBJ databases">
        <authorList>
            <person name="Stapleton M."/>
            <person name="Booth B."/>
            <person name="Carlson J.W."/>
            <person name="Chavez C."/>
            <person name="Frise E."/>
            <person name="George R.A."/>
            <person name="Pacleb J.M."/>
            <person name="Park S."/>
            <person name="Wan K.H."/>
            <person name="Yu C."/>
            <person name="Celniker S.E."/>
        </authorList>
    </citation>
    <scope>NUCLEOTIDE SEQUENCE [LARGE SCALE MRNA] OF 22-518 (ISOFORM E)</scope>
    <source>
        <strain>Berkeley</strain>
        <tissue>Embryo</tissue>
    </source>
</reference>
<reference key="6">
    <citation type="journal article" date="2007" name="Mol. Biosyst.">
        <title>An integrated chemical, mass spectrometric and computational strategy for (quantitative) phosphoproteomics: application to Drosophila melanogaster Kc167 cells.</title>
        <authorList>
            <person name="Bodenmiller B."/>
            <person name="Mueller L.N."/>
            <person name="Pedrioli P.G.A."/>
            <person name="Pflieger D."/>
            <person name="Juenger M.A."/>
            <person name="Eng J.K."/>
            <person name="Aebersold R."/>
            <person name="Tao W.A."/>
        </authorList>
    </citation>
    <scope>PHOSPHORYLATION [LARGE SCALE ANALYSIS] AT SER-190</scope>
    <scope>IDENTIFICATION BY MASS SPECTROMETRY</scope>
</reference>
<reference key="7">
    <citation type="journal article" date="2008" name="J. Proteome Res.">
        <title>Phosphoproteome analysis of Drosophila melanogaster embryos.</title>
        <authorList>
            <person name="Zhai B."/>
            <person name="Villen J."/>
            <person name="Beausoleil S.A."/>
            <person name="Mintseris J."/>
            <person name="Gygi S.P."/>
        </authorList>
    </citation>
    <scope>PHOSPHORYLATION [LARGE SCALE ANALYSIS] AT SER-190 AND SER-194</scope>
    <scope>IDENTIFICATION BY MASS SPECTROMETRY</scope>
    <source>
        <tissue>Embryo</tissue>
    </source>
</reference>